<gene>
    <name evidence="2" type="primary">tal</name>
    <name type="ordered locus">CGSHiEE_06420</name>
</gene>
<proteinExistence type="inferred from homology"/>
<name>TAL_HAEIE</name>
<evidence type="ECO:0000250" key="1"/>
<evidence type="ECO:0000255" key="2">
    <source>
        <dbReference type="HAMAP-Rule" id="MF_00492"/>
    </source>
</evidence>
<dbReference type="EC" id="2.2.1.2" evidence="2"/>
<dbReference type="EMBL" id="CP000671">
    <property type="protein sequence ID" value="ABQ98631.1"/>
    <property type="molecule type" value="Genomic_DNA"/>
</dbReference>
<dbReference type="SMR" id="A5UCY0"/>
<dbReference type="KEGG" id="hip:CGSHiEE_06420"/>
<dbReference type="HOGENOM" id="CLU_047470_0_1_6"/>
<dbReference type="UniPathway" id="UPA00115">
    <property type="reaction ID" value="UER00414"/>
</dbReference>
<dbReference type="GO" id="GO:0005829">
    <property type="term" value="C:cytosol"/>
    <property type="evidence" value="ECO:0007669"/>
    <property type="project" value="TreeGrafter"/>
</dbReference>
<dbReference type="GO" id="GO:0004801">
    <property type="term" value="F:transaldolase activity"/>
    <property type="evidence" value="ECO:0000250"/>
    <property type="project" value="UniProtKB"/>
</dbReference>
<dbReference type="GO" id="GO:0005975">
    <property type="term" value="P:carbohydrate metabolic process"/>
    <property type="evidence" value="ECO:0007669"/>
    <property type="project" value="InterPro"/>
</dbReference>
<dbReference type="GO" id="GO:0006098">
    <property type="term" value="P:pentose-phosphate shunt"/>
    <property type="evidence" value="ECO:0007669"/>
    <property type="project" value="UniProtKB-UniRule"/>
</dbReference>
<dbReference type="CDD" id="cd00957">
    <property type="entry name" value="Transaldolase_TalAB"/>
    <property type="match status" value="1"/>
</dbReference>
<dbReference type="FunFam" id="3.20.20.70:FF:000002">
    <property type="entry name" value="Transaldolase"/>
    <property type="match status" value="1"/>
</dbReference>
<dbReference type="Gene3D" id="3.20.20.70">
    <property type="entry name" value="Aldolase class I"/>
    <property type="match status" value="1"/>
</dbReference>
<dbReference type="HAMAP" id="MF_00492">
    <property type="entry name" value="Transaldolase_1"/>
    <property type="match status" value="1"/>
</dbReference>
<dbReference type="InterPro" id="IPR013785">
    <property type="entry name" value="Aldolase_TIM"/>
</dbReference>
<dbReference type="InterPro" id="IPR001585">
    <property type="entry name" value="TAL/FSA"/>
</dbReference>
<dbReference type="InterPro" id="IPR004730">
    <property type="entry name" value="Transaldolase_1"/>
</dbReference>
<dbReference type="InterPro" id="IPR018225">
    <property type="entry name" value="Transaldolase_AS"/>
</dbReference>
<dbReference type="NCBIfam" id="NF009001">
    <property type="entry name" value="PRK12346.1"/>
    <property type="match status" value="1"/>
</dbReference>
<dbReference type="NCBIfam" id="TIGR00874">
    <property type="entry name" value="talAB"/>
    <property type="match status" value="1"/>
</dbReference>
<dbReference type="PANTHER" id="PTHR10683">
    <property type="entry name" value="TRANSALDOLASE"/>
    <property type="match status" value="1"/>
</dbReference>
<dbReference type="PANTHER" id="PTHR10683:SF18">
    <property type="entry name" value="TRANSALDOLASE"/>
    <property type="match status" value="1"/>
</dbReference>
<dbReference type="Pfam" id="PF00923">
    <property type="entry name" value="TAL_FSA"/>
    <property type="match status" value="1"/>
</dbReference>
<dbReference type="SUPFAM" id="SSF51569">
    <property type="entry name" value="Aldolase"/>
    <property type="match status" value="1"/>
</dbReference>
<dbReference type="PROSITE" id="PS01054">
    <property type="entry name" value="TRANSALDOLASE_1"/>
    <property type="match status" value="1"/>
</dbReference>
<dbReference type="PROSITE" id="PS00958">
    <property type="entry name" value="TRANSALDOLASE_2"/>
    <property type="match status" value="1"/>
</dbReference>
<keyword id="KW-0963">Cytoplasm</keyword>
<keyword id="KW-0570">Pentose shunt</keyword>
<keyword id="KW-0704">Schiff base</keyword>
<keyword id="KW-0808">Transferase</keyword>
<organism>
    <name type="scientific">Haemophilus influenzae (strain PittEE)</name>
    <dbReference type="NCBI Taxonomy" id="374930"/>
    <lineage>
        <taxon>Bacteria</taxon>
        <taxon>Pseudomonadati</taxon>
        <taxon>Pseudomonadota</taxon>
        <taxon>Gammaproteobacteria</taxon>
        <taxon>Pasteurellales</taxon>
        <taxon>Pasteurellaceae</taxon>
        <taxon>Haemophilus</taxon>
    </lineage>
</organism>
<comment type="function">
    <text evidence="2">Transaldolase is important for the balance of metabolites in the pentose-phosphate pathway.</text>
</comment>
<comment type="catalytic activity">
    <reaction evidence="2">
        <text>D-sedoheptulose 7-phosphate + D-glyceraldehyde 3-phosphate = D-erythrose 4-phosphate + beta-D-fructose 6-phosphate</text>
        <dbReference type="Rhea" id="RHEA:17053"/>
        <dbReference type="ChEBI" id="CHEBI:16897"/>
        <dbReference type="ChEBI" id="CHEBI:57483"/>
        <dbReference type="ChEBI" id="CHEBI:57634"/>
        <dbReference type="ChEBI" id="CHEBI:59776"/>
        <dbReference type="EC" id="2.2.1.2"/>
    </reaction>
</comment>
<comment type="pathway">
    <text evidence="2">Carbohydrate degradation; pentose phosphate pathway; D-glyceraldehyde 3-phosphate and beta-D-fructose 6-phosphate from D-ribose 5-phosphate and D-xylulose 5-phosphate (non-oxidative stage): step 2/3.</text>
</comment>
<comment type="subunit">
    <text evidence="1">Homodimer.</text>
</comment>
<comment type="subcellular location">
    <subcellularLocation>
        <location evidence="2">Cytoplasm</location>
    </subcellularLocation>
</comment>
<comment type="similarity">
    <text evidence="2">Belongs to the transaldolase family. Type 1 subfamily.</text>
</comment>
<reference key="1">
    <citation type="journal article" date="2007" name="Genome Biol.">
        <title>Characterization and modeling of the Haemophilus influenzae core and supragenomes based on the complete genomic sequences of Rd and 12 clinical nontypeable strains.</title>
        <authorList>
            <person name="Hogg J.S."/>
            <person name="Hu F.Z."/>
            <person name="Janto B."/>
            <person name="Boissy R."/>
            <person name="Hayes J."/>
            <person name="Keefe R."/>
            <person name="Post J.C."/>
            <person name="Ehrlich G.D."/>
        </authorList>
    </citation>
    <scope>NUCLEOTIDE SEQUENCE [LARGE SCALE GENOMIC DNA]</scope>
    <source>
        <strain>PittEE</strain>
    </source>
</reference>
<protein>
    <recommendedName>
        <fullName evidence="2">Transaldolase</fullName>
        <ecNumber evidence="2">2.2.1.2</ecNumber>
    </recommendedName>
</protein>
<sequence>MTTQLDSLRNMTVVVADTGDIDAIKKYQPQDATTNPSLILSASALPQYAPLIDEAVAYAKAQSNDKAQQLIDAEDKLAVNIGLEILKIVPGRISTEVDARLSYDTQATVEKARKLIALYNAAGISNDRILIKIASTWQGIRAAEILEKEGINCNLTLLFSEAQARACAEAGVYLISPFVGRILDWYKANSDKKEYAPAEDPGVISVTKIYNYYKEYGYNTVVMGASFRNVGEITELAGCDRLTIAPALLKELQENSTALVRKLEYKGEVKAKPQPLTEAEFYWQHNSDAMAVEKLAEGIRKFAIDQEKLETMLSAEL</sequence>
<accession>A5UCY0</accession>
<feature type="chain" id="PRO_1000014499" description="Transaldolase">
    <location>
        <begin position="1"/>
        <end position="317"/>
    </location>
</feature>
<feature type="active site" description="Schiff-base intermediate with substrate" evidence="2">
    <location>
        <position position="132"/>
    </location>
</feature>